<feature type="signal peptide" evidence="1">
    <location>
        <begin position="1"/>
        <end position="16"/>
    </location>
</feature>
<feature type="chain" id="PRO_0000015459" description="X-linked interleukin-1 receptor accessory protein-like 2">
    <location>
        <begin position="17"/>
        <end position="686"/>
    </location>
</feature>
<feature type="topological domain" description="Extracellular" evidence="1">
    <location>
        <begin position="17"/>
        <end position="354"/>
    </location>
</feature>
<feature type="transmembrane region" description="Helical" evidence="1">
    <location>
        <begin position="355"/>
        <end position="375"/>
    </location>
</feature>
<feature type="topological domain" description="Cytoplasmic" evidence="1">
    <location>
        <begin position="376"/>
        <end position="686"/>
    </location>
</feature>
<feature type="domain" description="Ig-like C2-type 1">
    <location>
        <begin position="18"/>
        <end position="132"/>
    </location>
</feature>
<feature type="domain" description="Ig-like C2-type 2">
    <location>
        <begin position="141"/>
        <end position="232"/>
    </location>
</feature>
<feature type="domain" description="Ig-like C2-type 3">
    <location>
        <begin position="239"/>
        <end position="347"/>
    </location>
</feature>
<feature type="domain" description="TIR" evidence="3">
    <location>
        <begin position="400"/>
        <end position="556"/>
    </location>
</feature>
<feature type="active site" evidence="3">
    <location>
        <position position="488"/>
    </location>
</feature>
<feature type="glycosylation site" description="N-linked (GlcNAc...) asparagine" evidence="1">
    <location>
        <position position="63"/>
    </location>
</feature>
<feature type="glycosylation site" description="N-linked (GlcNAc...) asparagine" evidence="1">
    <location>
        <position position="120"/>
    </location>
</feature>
<feature type="glycosylation site" description="N-linked (GlcNAc...) asparagine" evidence="1">
    <location>
        <position position="136"/>
    </location>
</feature>
<feature type="glycosylation site" description="N-linked (GlcNAc...) asparagine" evidence="1">
    <location>
        <position position="211"/>
    </location>
</feature>
<feature type="glycosylation site" description="N-linked (GlcNAc...) asparagine" evidence="1">
    <location>
        <position position="328"/>
    </location>
</feature>
<feature type="disulfide bond" evidence="2">
    <location>
        <begin position="53"/>
        <end position="116"/>
    </location>
</feature>
<feature type="disulfide bond" evidence="2">
    <location>
        <begin position="162"/>
        <end position="214"/>
    </location>
</feature>
<feature type="disulfide bond" evidence="2">
    <location>
        <begin position="265"/>
        <end position="331"/>
    </location>
</feature>
<feature type="sequence variant" id="VAR_036592" description="In a breast cancer sample; somatic mutation." evidence="7">
    <original>F</original>
    <variation>L</variation>
    <location>
        <position position="606"/>
    </location>
</feature>
<feature type="strand" evidence="10">
    <location>
        <begin position="402"/>
        <end position="407"/>
    </location>
</feature>
<feature type="helix" evidence="10">
    <location>
        <begin position="421"/>
        <end position="428"/>
    </location>
</feature>
<feature type="helix" evidence="10">
    <location>
        <begin position="430"/>
        <end position="436"/>
    </location>
</feature>
<feature type="helix" evidence="10">
    <location>
        <begin position="446"/>
        <end position="449"/>
    </location>
</feature>
<feature type="helix" evidence="10">
    <location>
        <begin position="456"/>
        <end position="465"/>
    </location>
</feature>
<feature type="strand" evidence="10">
    <location>
        <begin position="467"/>
        <end position="474"/>
    </location>
</feature>
<feature type="helix" evidence="10">
    <location>
        <begin position="476"/>
        <end position="481"/>
    </location>
</feature>
<feature type="turn" evidence="10">
    <location>
        <begin position="482"/>
        <end position="484"/>
    </location>
</feature>
<feature type="helix" evidence="10">
    <location>
        <begin position="485"/>
        <end position="489"/>
    </location>
</feature>
<feature type="helix" evidence="10">
    <location>
        <begin position="491"/>
        <end position="498"/>
    </location>
</feature>
<feature type="strand" evidence="10">
    <location>
        <begin position="501"/>
        <end position="508"/>
    </location>
</feature>
<feature type="helix" evidence="10">
    <location>
        <begin position="515"/>
        <end position="526"/>
    </location>
</feature>
<feature type="strand" evidence="10">
    <location>
        <begin position="529"/>
        <end position="535"/>
    </location>
</feature>
<feature type="helix" evidence="10">
    <location>
        <begin position="539"/>
        <end position="542"/>
    </location>
</feature>
<feature type="strand" evidence="9">
    <location>
        <begin position="543"/>
        <end position="545"/>
    </location>
</feature>
<feature type="helix" evidence="10">
    <location>
        <begin position="547"/>
        <end position="555"/>
    </location>
</feature>
<comment type="catalytic activity">
    <reaction evidence="3">
        <text>NAD(+) + H2O = ADP-D-ribose + nicotinamide + H(+)</text>
        <dbReference type="Rhea" id="RHEA:16301"/>
        <dbReference type="ChEBI" id="CHEBI:15377"/>
        <dbReference type="ChEBI" id="CHEBI:15378"/>
        <dbReference type="ChEBI" id="CHEBI:17154"/>
        <dbReference type="ChEBI" id="CHEBI:57540"/>
        <dbReference type="ChEBI" id="CHEBI:57967"/>
        <dbReference type="EC" id="3.2.2.6"/>
    </reaction>
    <physiologicalReaction direction="left-to-right" evidence="3">
        <dbReference type="Rhea" id="RHEA:16302"/>
    </physiologicalReaction>
</comment>
<comment type="subcellular location">
    <subcellularLocation>
        <location>Membrane</location>
        <topology>Single-pass type I membrane protein</topology>
    </subcellularLocation>
</comment>
<comment type="tissue specificity">
    <text evidence="4 5 6">Detected at low levels in fetal and adult brain, in particular in the frontal lobe, temporal lobe and cerebellum. Detected at very low levels in skin, liver, fetal ovary and in placenta.</text>
</comment>
<comment type="domain">
    <text evidence="3">The TIR domain mediates NAD(+) hydrolase (NADase) activity. Self-association of TIR domains is required for NADase activity.</text>
</comment>
<comment type="similarity">
    <text evidence="8">Belongs to the interleukin-1 receptor family.</text>
</comment>
<protein>
    <recommendedName>
        <fullName>X-linked interleukin-1 receptor accessory protein-like 2</fullName>
        <shortName>IL-1 receptor accessory protein-like 2</shortName>
        <shortName>IL-1-RAPL-2</shortName>
        <shortName>IL-1RAPL-2</shortName>
        <shortName>IL1RAPL-2</shortName>
        <ecNumber evidence="3">3.2.2.6</ecNumber>
    </recommendedName>
    <alternativeName>
        <fullName>IL1RAPL-2-related protein</fullName>
    </alternativeName>
    <alternativeName>
        <fullName>Interleukin-1 receptor 9</fullName>
        <shortName>IL-1R-9</shortName>
        <shortName>IL-1R9</shortName>
    </alternativeName>
    <alternativeName>
        <fullName>Three immunoglobulin domain-containing IL-1 receptor-related 1</fullName>
        <shortName>TIGIRR-1</shortName>
    </alternativeName>
</protein>
<accession>Q9NP60</accession>
<accession>Q2M3U3</accession>
<accession>Q9NZN0</accession>
<name>IRPL2_HUMAN</name>
<proteinExistence type="evidence at protein level"/>
<organism>
    <name type="scientific">Homo sapiens</name>
    <name type="common">Human</name>
    <dbReference type="NCBI Taxonomy" id="9606"/>
    <lineage>
        <taxon>Eukaryota</taxon>
        <taxon>Metazoa</taxon>
        <taxon>Chordata</taxon>
        <taxon>Craniata</taxon>
        <taxon>Vertebrata</taxon>
        <taxon>Euteleostomi</taxon>
        <taxon>Mammalia</taxon>
        <taxon>Eutheria</taxon>
        <taxon>Euarchontoglires</taxon>
        <taxon>Primates</taxon>
        <taxon>Haplorrhini</taxon>
        <taxon>Catarrhini</taxon>
        <taxon>Hominidae</taxon>
        <taxon>Homo</taxon>
    </lineage>
</organism>
<reference key="1">
    <citation type="journal article" date="2000" name="Genomics">
        <title>Computational identification, cloning, and characterization of IL-1R9, a novel interleukin-1 receptor-like gene encoded over an unusually large interval of human chromosome Xq22.2-q22.3.</title>
        <authorList>
            <person name="Sana T.R."/>
            <person name="Debets R."/>
            <person name="Timans J.C."/>
            <person name="Bazan J.F."/>
            <person name="Kastelein R.A."/>
        </authorList>
    </citation>
    <scope>NUCLEOTIDE SEQUENCE [MRNA]</scope>
    <scope>TISSUE SPECIFICITY</scope>
    <source>
        <tissue>Fetal brain</tissue>
    </source>
</reference>
<reference key="2">
    <citation type="journal article" date="2000" name="J. Biol. Chem.">
        <title>Identification and characterization of two members of a novel class of the interleukin-1 receptor (IL-1R) family. Delineation of a new class of IL-1R-related proteins based on signaling.</title>
        <authorList>
            <person name="Born T.L."/>
            <person name="Smith D.E."/>
            <person name="Garka K.E."/>
            <person name="Renshaw B.R."/>
            <person name="Bertles J.S."/>
            <person name="Sims J.E."/>
        </authorList>
    </citation>
    <scope>NUCLEOTIDE SEQUENCE [MRNA]</scope>
    <scope>TISSUE SPECIFICITY</scope>
    <source>
        <tissue>Liver</tissue>
    </source>
</reference>
<reference key="3">
    <citation type="submission" date="2000-02" db="EMBL/GenBank/DDBJ databases">
        <title>A gene (IL1RAPL-2) with 61% identity to IL1RAPL maps to Xq22.2.</title>
        <authorList>
            <person name="Grabowski M."/>
            <person name="Lorenz B."/>
            <person name="Hubel R."/>
            <person name="Strom T.M."/>
        </authorList>
    </citation>
    <scope>NUCLEOTIDE SEQUENCE [MRNA]</scope>
    <source>
        <tissue>Brain</tissue>
    </source>
</reference>
<reference key="4">
    <citation type="journal article" date="2001" name="Gene">
        <title>IL1RAPL2 maps to Xq22 and is specifically expressed in the central nervous system.</title>
        <authorList>
            <person name="Ferrante M.I."/>
            <person name="Ghiani M."/>
            <person name="Bulfone A."/>
            <person name="Franco B."/>
        </authorList>
    </citation>
    <scope>NUCLEOTIDE SEQUENCE [MRNA]</scope>
    <scope>TISSUE SPECIFICITY</scope>
    <source>
        <tissue>Brain</tissue>
    </source>
</reference>
<reference key="5">
    <citation type="journal article" date="2004" name="Nat. Genet.">
        <title>Complete sequencing and characterization of 21,243 full-length human cDNAs.</title>
        <authorList>
            <person name="Ota T."/>
            <person name="Suzuki Y."/>
            <person name="Nishikawa T."/>
            <person name="Otsuki T."/>
            <person name="Sugiyama T."/>
            <person name="Irie R."/>
            <person name="Wakamatsu A."/>
            <person name="Hayashi K."/>
            <person name="Sato H."/>
            <person name="Nagai K."/>
            <person name="Kimura K."/>
            <person name="Makita H."/>
            <person name="Sekine M."/>
            <person name="Obayashi M."/>
            <person name="Nishi T."/>
            <person name="Shibahara T."/>
            <person name="Tanaka T."/>
            <person name="Ishii S."/>
            <person name="Yamamoto J."/>
            <person name="Saito K."/>
            <person name="Kawai Y."/>
            <person name="Isono Y."/>
            <person name="Nakamura Y."/>
            <person name="Nagahari K."/>
            <person name="Murakami K."/>
            <person name="Yasuda T."/>
            <person name="Iwayanagi T."/>
            <person name="Wagatsuma M."/>
            <person name="Shiratori A."/>
            <person name="Sudo H."/>
            <person name="Hosoiri T."/>
            <person name="Kaku Y."/>
            <person name="Kodaira H."/>
            <person name="Kondo H."/>
            <person name="Sugawara M."/>
            <person name="Takahashi M."/>
            <person name="Kanda K."/>
            <person name="Yokoi T."/>
            <person name="Furuya T."/>
            <person name="Kikkawa E."/>
            <person name="Omura Y."/>
            <person name="Abe K."/>
            <person name="Kamihara K."/>
            <person name="Katsuta N."/>
            <person name="Sato K."/>
            <person name="Tanikawa M."/>
            <person name="Yamazaki M."/>
            <person name="Ninomiya K."/>
            <person name="Ishibashi T."/>
            <person name="Yamashita H."/>
            <person name="Murakawa K."/>
            <person name="Fujimori K."/>
            <person name="Tanai H."/>
            <person name="Kimata M."/>
            <person name="Watanabe M."/>
            <person name="Hiraoka S."/>
            <person name="Chiba Y."/>
            <person name="Ishida S."/>
            <person name="Ono Y."/>
            <person name="Takiguchi S."/>
            <person name="Watanabe S."/>
            <person name="Yosida M."/>
            <person name="Hotuta T."/>
            <person name="Kusano J."/>
            <person name="Kanehori K."/>
            <person name="Takahashi-Fujii A."/>
            <person name="Hara H."/>
            <person name="Tanase T.-O."/>
            <person name="Nomura Y."/>
            <person name="Togiya S."/>
            <person name="Komai F."/>
            <person name="Hara R."/>
            <person name="Takeuchi K."/>
            <person name="Arita M."/>
            <person name="Imose N."/>
            <person name="Musashino K."/>
            <person name="Yuuki H."/>
            <person name="Oshima A."/>
            <person name="Sasaki N."/>
            <person name="Aotsuka S."/>
            <person name="Yoshikawa Y."/>
            <person name="Matsunawa H."/>
            <person name="Ichihara T."/>
            <person name="Shiohata N."/>
            <person name="Sano S."/>
            <person name="Moriya S."/>
            <person name="Momiyama H."/>
            <person name="Satoh N."/>
            <person name="Takami S."/>
            <person name="Terashima Y."/>
            <person name="Suzuki O."/>
            <person name="Nakagawa S."/>
            <person name="Senoh A."/>
            <person name="Mizoguchi H."/>
            <person name="Goto Y."/>
            <person name="Shimizu F."/>
            <person name="Wakebe H."/>
            <person name="Hishigaki H."/>
            <person name="Watanabe T."/>
            <person name="Sugiyama A."/>
            <person name="Takemoto M."/>
            <person name="Kawakami B."/>
            <person name="Yamazaki M."/>
            <person name="Watanabe K."/>
            <person name="Kumagai A."/>
            <person name="Itakura S."/>
            <person name="Fukuzumi Y."/>
            <person name="Fujimori Y."/>
            <person name="Komiyama M."/>
            <person name="Tashiro H."/>
            <person name="Tanigami A."/>
            <person name="Fujiwara T."/>
            <person name="Ono T."/>
            <person name="Yamada K."/>
            <person name="Fujii Y."/>
            <person name="Ozaki K."/>
            <person name="Hirao M."/>
            <person name="Ohmori Y."/>
            <person name="Kawabata A."/>
            <person name="Hikiji T."/>
            <person name="Kobatake N."/>
            <person name="Inagaki H."/>
            <person name="Ikema Y."/>
            <person name="Okamoto S."/>
            <person name="Okitani R."/>
            <person name="Kawakami T."/>
            <person name="Noguchi S."/>
            <person name="Itoh T."/>
            <person name="Shigeta K."/>
            <person name="Senba T."/>
            <person name="Matsumura K."/>
            <person name="Nakajima Y."/>
            <person name="Mizuno T."/>
            <person name="Morinaga M."/>
            <person name="Sasaki M."/>
            <person name="Togashi T."/>
            <person name="Oyama M."/>
            <person name="Hata H."/>
            <person name="Watanabe M."/>
            <person name="Komatsu T."/>
            <person name="Mizushima-Sugano J."/>
            <person name="Satoh T."/>
            <person name="Shirai Y."/>
            <person name="Takahashi Y."/>
            <person name="Nakagawa K."/>
            <person name="Okumura K."/>
            <person name="Nagase T."/>
            <person name="Nomura N."/>
            <person name="Kikuchi H."/>
            <person name="Masuho Y."/>
            <person name="Yamashita R."/>
            <person name="Nakai K."/>
            <person name="Yada T."/>
            <person name="Nakamura Y."/>
            <person name="Ohara O."/>
            <person name="Isogai T."/>
            <person name="Sugano S."/>
        </authorList>
    </citation>
    <scope>NUCLEOTIDE SEQUENCE [LARGE SCALE MRNA]</scope>
    <source>
        <tissue>Thalamus</tissue>
    </source>
</reference>
<reference key="6">
    <citation type="journal article" date="2005" name="Nature">
        <title>The DNA sequence of the human X chromosome.</title>
        <authorList>
            <person name="Ross M.T."/>
            <person name="Grafham D.V."/>
            <person name="Coffey A.J."/>
            <person name="Scherer S."/>
            <person name="McLay K."/>
            <person name="Muzny D."/>
            <person name="Platzer M."/>
            <person name="Howell G.R."/>
            <person name="Burrows C."/>
            <person name="Bird C.P."/>
            <person name="Frankish A."/>
            <person name="Lovell F.L."/>
            <person name="Howe K.L."/>
            <person name="Ashurst J.L."/>
            <person name="Fulton R.S."/>
            <person name="Sudbrak R."/>
            <person name="Wen G."/>
            <person name="Jones M.C."/>
            <person name="Hurles M.E."/>
            <person name="Andrews T.D."/>
            <person name="Scott C.E."/>
            <person name="Searle S."/>
            <person name="Ramser J."/>
            <person name="Whittaker A."/>
            <person name="Deadman R."/>
            <person name="Carter N.P."/>
            <person name="Hunt S.E."/>
            <person name="Chen R."/>
            <person name="Cree A."/>
            <person name="Gunaratne P."/>
            <person name="Havlak P."/>
            <person name="Hodgson A."/>
            <person name="Metzker M.L."/>
            <person name="Richards S."/>
            <person name="Scott G."/>
            <person name="Steffen D."/>
            <person name="Sodergren E."/>
            <person name="Wheeler D.A."/>
            <person name="Worley K.C."/>
            <person name="Ainscough R."/>
            <person name="Ambrose K.D."/>
            <person name="Ansari-Lari M.A."/>
            <person name="Aradhya S."/>
            <person name="Ashwell R.I."/>
            <person name="Babbage A.K."/>
            <person name="Bagguley C.L."/>
            <person name="Ballabio A."/>
            <person name="Banerjee R."/>
            <person name="Barker G.E."/>
            <person name="Barlow K.F."/>
            <person name="Barrett I.P."/>
            <person name="Bates K.N."/>
            <person name="Beare D.M."/>
            <person name="Beasley H."/>
            <person name="Beasley O."/>
            <person name="Beck A."/>
            <person name="Bethel G."/>
            <person name="Blechschmidt K."/>
            <person name="Brady N."/>
            <person name="Bray-Allen S."/>
            <person name="Bridgeman A.M."/>
            <person name="Brown A.J."/>
            <person name="Brown M.J."/>
            <person name="Bonnin D."/>
            <person name="Bruford E.A."/>
            <person name="Buhay C."/>
            <person name="Burch P."/>
            <person name="Burford D."/>
            <person name="Burgess J."/>
            <person name="Burrill W."/>
            <person name="Burton J."/>
            <person name="Bye J.M."/>
            <person name="Carder C."/>
            <person name="Carrel L."/>
            <person name="Chako J."/>
            <person name="Chapman J.C."/>
            <person name="Chavez D."/>
            <person name="Chen E."/>
            <person name="Chen G."/>
            <person name="Chen Y."/>
            <person name="Chen Z."/>
            <person name="Chinault C."/>
            <person name="Ciccodicola A."/>
            <person name="Clark S.Y."/>
            <person name="Clarke G."/>
            <person name="Clee C.M."/>
            <person name="Clegg S."/>
            <person name="Clerc-Blankenburg K."/>
            <person name="Clifford K."/>
            <person name="Cobley V."/>
            <person name="Cole C.G."/>
            <person name="Conquer J.S."/>
            <person name="Corby N."/>
            <person name="Connor R.E."/>
            <person name="David R."/>
            <person name="Davies J."/>
            <person name="Davis C."/>
            <person name="Davis J."/>
            <person name="Delgado O."/>
            <person name="Deshazo D."/>
            <person name="Dhami P."/>
            <person name="Ding Y."/>
            <person name="Dinh H."/>
            <person name="Dodsworth S."/>
            <person name="Draper H."/>
            <person name="Dugan-Rocha S."/>
            <person name="Dunham A."/>
            <person name="Dunn M."/>
            <person name="Durbin K.J."/>
            <person name="Dutta I."/>
            <person name="Eades T."/>
            <person name="Ellwood M."/>
            <person name="Emery-Cohen A."/>
            <person name="Errington H."/>
            <person name="Evans K.L."/>
            <person name="Faulkner L."/>
            <person name="Francis F."/>
            <person name="Frankland J."/>
            <person name="Fraser A.E."/>
            <person name="Galgoczy P."/>
            <person name="Gilbert J."/>
            <person name="Gill R."/>
            <person name="Gloeckner G."/>
            <person name="Gregory S.G."/>
            <person name="Gribble S."/>
            <person name="Griffiths C."/>
            <person name="Grocock R."/>
            <person name="Gu Y."/>
            <person name="Gwilliam R."/>
            <person name="Hamilton C."/>
            <person name="Hart E.A."/>
            <person name="Hawes A."/>
            <person name="Heath P.D."/>
            <person name="Heitmann K."/>
            <person name="Hennig S."/>
            <person name="Hernandez J."/>
            <person name="Hinzmann B."/>
            <person name="Ho S."/>
            <person name="Hoffs M."/>
            <person name="Howden P.J."/>
            <person name="Huckle E.J."/>
            <person name="Hume J."/>
            <person name="Hunt P.J."/>
            <person name="Hunt A.R."/>
            <person name="Isherwood J."/>
            <person name="Jacob L."/>
            <person name="Johnson D."/>
            <person name="Jones S."/>
            <person name="de Jong P.J."/>
            <person name="Joseph S.S."/>
            <person name="Keenan S."/>
            <person name="Kelly S."/>
            <person name="Kershaw J.K."/>
            <person name="Khan Z."/>
            <person name="Kioschis P."/>
            <person name="Klages S."/>
            <person name="Knights A.J."/>
            <person name="Kosiura A."/>
            <person name="Kovar-Smith C."/>
            <person name="Laird G.K."/>
            <person name="Langford C."/>
            <person name="Lawlor S."/>
            <person name="Leversha M."/>
            <person name="Lewis L."/>
            <person name="Liu W."/>
            <person name="Lloyd C."/>
            <person name="Lloyd D.M."/>
            <person name="Loulseged H."/>
            <person name="Loveland J.E."/>
            <person name="Lovell J.D."/>
            <person name="Lozado R."/>
            <person name="Lu J."/>
            <person name="Lyne R."/>
            <person name="Ma J."/>
            <person name="Maheshwari M."/>
            <person name="Matthews L.H."/>
            <person name="McDowall J."/>
            <person name="McLaren S."/>
            <person name="McMurray A."/>
            <person name="Meidl P."/>
            <person name="Meitinger T."/>
            <person name="Milne S."/>
            <person name="Miner G."/>
            <person name="Mistry S.L."/>
            <person name="Morgan M."/>
            <person name="Morris S."/>
            <person name="Mueller I."/>
            <person name="Mullikin J.C."/>
            <person name="Nguyen N."/>
            <person name="Nordsiek G."/>
            <person name="Nyakatura G."/>
            <person name="O'dell C.N."/>
            <person name="Okwuonu G."/>
            <person name="Palmer S."/>
            <person name="Pandian R."/>
            <person name="Parker D."/>
            <person name="Parrish J."/>
            <person name="Pasternak S."/>
            <person name="Patel D."/>
            <person name="Pearce A.V."/>
            <person name="Pearson D.M."/>
            <person name="Pelan S.E."/>
            <person name="Perez L."/>
            <person name="Porter K.M."/>
            <person name="Ramsey Y."/>
            <person name="Reichwald K."/>
            <person name="Rhodes S."/>
            <person name="Ridler K.A."/>
            <person name="Schlessinger D."/>
            <person name="Schueler M.G."/>
            <person name="Sehra H.K."/>
            <person name="Shaw-Smith C."/>
            <person name="Shen H."/>
            <person name="Sheridan E.M."/>
            <person name="Shownkeen R."/>
            <person name="Skuce C.D."/>
            <person name="Smith M.L."/>
            <person name="Sotheran E.C."/>
            <person name="Steingruber H.E."/>
            <person name="Steward C.A."/>
            <person name="Storey R."/>
            <person name="Swann R.M."/>
            <person name="Swarbreck D."/>
            <person name="Tabor P.E."/>
            <person name="Taudien S."/>
            <person name="Taylor T."/>
            <person name="Teague B."/>
            <person name="Thomas K."/>
            <person name="Thorpe A."/>
            <person name="Timms K."/>
            <person name="Tracey A."/>
            <person name="Trevanion S."/>
            <person name="Tromans A.C."/>
            <person name="d'Urso M."/>
            <person name="Verduzco D."/>
            <person name="Villasana D."/>
            <person name="Waldron L."/>
            <person name="Wall M."/>
            <person name="Wang Q."/>
            <person name="Warren J."/>
            <person name="Warry G.L."/>
            <person name="Wei X."/>
            <person name="West A."/>
            <person name="Whitehead S.L."/>
            <person name="Whiteley M.N."/>
            <person name="Wilkinson J.E."/>
            <person name="Willey D.L."/>
            <person name="Williams G."/>
            <person name="Williams L."/>
            <person name="Williamson A."/>
            <person name="Williamson H."/>
            <person name="Wilming L."/>
            <person name="Woodmansey R.L."/>
            <person name="Wray P.W."/>
            <person name="Yen J."/>
            <person name="Zhang J."/>
            <person name="Zhou J."/>
            <person name="Zoghbi H."/>
            <person name="Zorilla S."/>
            <person name="Buck D."/>
            <person name="Reinhardt R."/>
            <person name="Poustka A."/>
            <person name="Rosenthal A."/>
            <person name="Lehrach H."/>
            <person name="Meindl A."/>
            <person name="Minx P.J."/>
            <person name="Hillier L.W."/>
            <person name="Willard H.F."/>
            <person name="Wilson R.K."/>
            <person name="Waterston R.H."/>
            <person name="Rice C.M."/>
            <person name="Vaudin M."/>
            <person name="Coulson A."/>
            <person name="Nelson D.L."/>
            <person name="Weinstock G."/>
            <person name="Sulston J.E."/>
            <person name="Durbin R.M."/>
            <person name="Hubbard T."/>
            <person name="Gibbs R.A."/>
            <person name="Beck S."/>
            <person name="Rogers J."/>
            <person name="Bentley D.R."/>
        </authorList>
    </citation>
    <scope>NUCLEOTIDE SEQUENCE [LARGE SCALE GENOMIC DNA]</scope>
</reference>
<reference key="7">
    <citation type="journal article" date="2004" name="Genome Res.">
        <title>The status, quality, and expansion of the NIH full-length cDNA project: the Mammalian Gene Collection (MGC).</title>
        <authorList>
            <consortium name="The MGC Project Team"/>
        </authorList>
    </citation>
    <scope>NUCLEOTIDE SEQUENCE [LARGE SCALE MRNA]</scope>
    <source>
        <tissue>Brain</tissue>
    </source>
</reference>
<reference key="8">
    <citation type="journal article" date="2000" name="Eur. J. Hum. Genet.">
        <title>Two novel members of the interleukin-1 receptor gene family, one deleted in Xp22.3-Xp21.3 mental retardation.</title>
        <authorList>
            <person name="Jin H."/>
            <person name="Gardner R.J."/>
            <person name="Viswesvaraiah R."/>
            <person name="Muntoni F."/>
            <person name="Roberts R.G."/>
        </authorList>
    </citation>
    <scope>NUCLEOTIDE SEQUENCE [MRNA] OF 29-686</scope>
</reference>
<reference key="9">
    <citation type="journal article" date="2006" name="Science">
        <title>The consensus coding sequences of human breast and colorectal cancers.</title>
        <authorList>
            <person name="Sjoeblom T."/>
            <person name="Jones S."/>
            <person name="Wood L.D."/>
            <person name="Parsons D.W."/>
            <person name="Lin J."/>
            <person name="Barber T.D."/>
            <person name="Mandelker D."/>
            <person name="Leary R.J."/>
            <person name="Ptak J."/>
            <person name="Silliman N."/>
            <person name="Szabo S."/>
            <person name="Buckhaults P."/>
            <person name="Farrell C."/>
            <person name="Meeh P."/>
            <person name="Markowitz S.D."/>
            <person name="Willis J."/>
            <person name="Dawson D."/>
            <person name="Willson J.K.V."/>
            <person name="Gazdar A.F."/>
            <person name="Hartigan J."/>
            <person name="Wu L."/>
            <person name="Liu C."/>
            <person name="Parmigiani G."/>
            <person name="Park B.H."/>
            <person name="Bachman K.E."/>
            <person name="Papadopoulos N."/>
            <person name="Vogelstein B."/>
            <person name="Kinzler K.W."/>
            <person name="Velculescu V.E."/>
        </authorList>
    </citation>
    <scope>VARIANT [LARGE SCALE ANALYSIS] LEU-606</scope>
</reference>
<dbReference type="EC" id="3.2.2.6" evidence="3"/>
<dbReference type="EMBL" id="AF212016">
    <property type="protein sequence ID" value="AAF61307.1"/>
    <property type="molecule type" value="mRNA"/>
</dbReference>
<dbReference type="EMBL" id="AF284436">
    <property type="protein sequence ID" value="AAG21370.1"/>
    <property type="molecule type" value="mRNA"/>
</dbReference>
<dbReference type="EMBL" id="AJ272208">
    <property type="protein sequence ID" value="CAB86868.1"/>
    <property type="molecule type" value="mRNA"/>
</dbReference>
<dbReference type="EMBL" id="AJ290436">
    <property type="protein sequence ID" value="CAB89867.1"/>
    <property type="molecule type" value="mRNA"/>
</dbReference>
<dbReference type="EMBL" id="AK290196">
    <property type="protein sequence ID" value="BAF82885.1"/>
    <property type="molecule type" value="mRNA"/>
</dbReference>
<dbReference type="EMBL" id="AL050401">
    <property type="status" value="NOT_ANNOTATED_CDS"/>
    <property type="molecule type" value="Genomic_DNA"/>
</dbReference>
<dbReference type="EMBL" id="Z68328">
    <property type="status" value="NOT_ANNOTATED_CDS"/>
    <property type="molecule type" value="Genomic_DNA"/>
</dbReference>
<dbReference type="EMBL" id="Z68330">
    <property type="status" value="NOT_ANNOTATED_CDS"/>
    <property type="molecule type" value="Genomic_DNA"/>
</dbReference>
<dbReference type="EMBL" id="Z68908">
    <property type="status" value="NOT_ANNOTATED_CDS"/>
    <property type="molecule type" value="Genomic_DNA"/>
</dbReference>
<dbReference type="EMBL" id="Z69721">
    <property type="status" value="NOT_ANNOTATED_CDS"/>
    <property type="molecule type" value="Genomic_DNA"/>
</dbReference>
<dbReference type="EMBL" id="Z74477">
    <property type="status" value="NOT_ANNOTATED_CDS"/>
    <property type="molecule type" value="Genomic_DNA"/>
</dbReference>
<dbReference type="EMBL" id="Z74619">
    <property type="status" value="NOT_ANNOTATED_CDS"/>
    <property type="molecule type" value="Genomic_DNA"/>
</dbReference>
<dbReference type="EMBL" id="Z81144">
    <property type="status" value="NOT_ANNOTATED_CDS"/>
    <property type="molecule type" value="Genomic_DNA"/>
</dbReference>
<dbReference type="EMBL" id="AF181285">
    <property type="protein sequence ID" value="AAF59412.1"/>
    <property type="molecule type" value="mRNA"/>
</dbReference>
<dbReference type="EMBL" id="BC104784">
    <property type="protein sequence ID" value="AAI04785.1"/>
    <property type="molecule type" value="mRNA"/>
</dbReference>
<dbReference type="EMBL" id="BC104786">
    <property type="protein sequence ID" value="AAI04787.1"/>
    <property type="molecule type" value="mRNA"/>
</dbReference>
<dbReference type="CCDS" id="CCDS14517.1"/>
<dbReference type="RefSeq" id="NP_059112.1">
    <property type="nucleotide sequence ID" value="NM_017416.2"/>
</dbReference>
<dbReference type="RefSeq" id="XP_016884892.1">
    <property type="nucleotide sequence ID" value="XM_017029403.1"/>
</dbReference>
<dbReference type="PDB" id="7FD3">
    <property type="method" value="X-ray"/>
    <property type="resolution" value="2.99 A"/>
    <property type="chains" value="A=400-560"/>
</dbReference>
<dbReference type="PDB" id="7SZL">
    <property type="method" value="X-ray"/>
    <property type="resolution" value="2.30 A"/>
    <property type="chains" value="A=400-559"/>
</dbReference>
<dbReference type="PDBsum" id="7FD3"/>
<dbReference type="PDBsum" id="7SZL"/>
<dbReference type="SMR" id="Q9NP60"/>
<dbReference type="BioGRID" id="117663">
    <property type="interactions" value="4"/>
</dbReference>
<dbReference type="FunCoup" id="Q9NP60">
    <property type="interactions" value="48"/>
</dbReference>
<dbReference type="IntAct" id="Q9NP60">
    <property type="interactions" value="1"/>
</dbReference>
<dbReference type="STRING" id="9606.ENSP00000361663"/>
<dbReference type="GlyCosmos" id="Q9NP60">
    <property type="glycosylation" value="5 sites, No reported glycans"/>
</dbReference>
<dbReference type="GlyGen" id="Q9NP60">
    <property type="glycosylation" value="5 sites"/>
</dbReference>
<dbReference type="iPTMnet" id="Q9NP60"/>
<dbReference type="PhosphoSitePlus" id="Q9NP60"/>
<dbReference type="BioMuta" id="IL1RAPL2"/>
<dbReference type="DMDM" id="34222651"/>
<dbReference type="PaxDb" id="9606-ENSP00000361663"/>
<dbReference type="PeptideAtlas" id="Q9NP60"/>
<dbReference type="ProteomicsDB" id="81891"/>
<dbReference type="Antibodypedia" id="35255">
    <property type="antibodies" value="278 antibodies from 30 providers"/>
</dbReference>
<dbReference type="DNASU" id="26280"/>
<dbReference type="Ensembl" id="ENST00000372582.6">
    <property type="protein sequence ID" value="ENSP00000361663.1"/>
    <property type="gene ID" value="ENSG00000189108.14"/>
</dbReference>
<dbReference type="GeneID" id="26280"/>
<dbReference type="KEGG" id="hsa:26280"/>
<dbReference type="MANE-Select" id="ENST00000372582.6">
    <property type="protein sequence ID" value="ENSP00000361663.1"/>
    <property type="RefSeq nucleotide sequence ID" value="NM_017416.2"/>
    <property type="RefSeq protein sequence ID" value="NP_059112.1"/>
</dbReference>
<dbReference type="UCSC" id="uc004elz.1">
    <property type="organism name" value="human"/>
</dbReference>
<dbReference type="AGR" id="HGNC:5997"/>
<dbReference type="CTD" id="26280"/>
<dbReference type="DisGeNET" id="26280"/>
<dbReference type="GeneCards" id="IL1RAPL2"/>
<dbReference type="HGNC" id="HGNC:5997">
    <property type="gene designation" value="IL1RAPL2"/>
</dbReference>
<dbReference type="HPA" id="ENSG00000189108">
    <property type="expression patterns" value="Tissue enhanced (adrenal)"/>
</dbReference>
<dbReference type="MIM" id="300277">
    <property type="type" value="gene"/>
</dbReference>
<dbReference type="neXtProt" id="NX_Q9NP60"/>
<dbReference type="OpenTargets" id="ENSG00000189108"/>
<dbReference type="PharmGKB" id="PA29813"/>
<dbReference type="VEuPathDB" id="HostDB:ENSG00000189108"/>
<dbReference type="eggNOG" id="KOG3971">
    <property type="taxonomic scope" value="Eukaryota"/>
</dbReference>
<dbReference type="GeneTree" id="ENSGT01090000260076"/>
<dbReference type="HOGENOM" id="CLU_025552_0_1_1"/>
<dbReference type="InParanoid" id="Q9NP60"/>
<dbReference type="OMA" id="QEPEVVW"/>
<dbReference type="OrthoDB" id="9925886at2759"/>
<dbReference type="PAN-GO" id="Q9NP60">
    <property type="GO annotations" value="0 GO annotations based on evolutionary models"/>
</dbReference>
<dbReference type="PhylomeDB" id="Q9NP60"/>
<dbReference type="TreeFam" id="TF333913"/>
<dbReference type="PathwayCommons" id="Q9NP60"/>
<dbReference type="Reactome" id="R-HSA-388844">
    <property type="pathway name" value="Receptor-type tyrosine-protein phosphatases"/>
</dbReference>
<dbReference type="SignaLink" id="Q9NP60"/>
<dbReference type="SIGNOR" id="Q9NP60"/>
<dbReference type="BioGRID-ORCS" id="26280">
    <property type="hits" value="17 hits in 764 CRISPR screens"/>
</dbReference>
<dbReference type="ChiTaRS" id="IL1RAPL2">
    <property type="organism name" value="human"/>
</dbReference>
<dbReference type="GeneWiki" id="IL1RAPL2"/>
<dbReference type="GenomeRNAi" id="26280"/>
<dbReference type="Pharos" id="Q9NP60">
    <property type="development level" value="Tbio"/>
</dbReference>
<dbReference type="PRO" id="PR:Q9NP60"/>
<dbReference type="Proteomes" id="UP000005640">
    <property type="component" value="Chromosome X"/>
</dbReference>
<dbReference type="RNAct" id="Q9NP60">
    <property type="molecule type" value="protein"/>
</dbReference>
<dbReference type="Bgee" id="ENSG00000189108">
    <property type="expression patterns" value="Expressed in male germ line stem cell (sensu Vertebrata) in testis and 90 other cell types or tissues"/>
</dbReference>
<dbReference type="ExpressionAtlas" id="Q9NP60">
    <property type="expression patterns" value="baseline and differential"/>
</dbReference>
<dbReference type="GO" id="GO:0009986">
    <property type="term" value="C:cell surface"/>
    <property type="evidence" value="ECO:0000318"/>
    <property type="project" value="GO_Central"/>
</dbReference>
<dbReference type="GO" id="GO:0098978">
    <property type="term" value="C:glutamatergic synapse"/>
    <property type="evidence" value="ECO:0000314"/>
    <property type="project" value="SynGO"/>
</dbReference>
<dbReference type="GO" id="GO:0005886">
    <property type="term" value="C:plasma membrane"/>
    <property type="evidence" value="ECO:0000318"/>
    <property type="project" value="GO_Central"/>
</dbReference>
<dbReference type="GO" id="GO:0004908">
    <property type="term" value="F:interleukin-1 receptor activity"/>
    <property type="evidence" value="ECO:0000304"/>
    <property type="project" value="ProtInc"/>
</dbReference>
<dbReference type="GO" id="GO:0004910">
    <property type="term" value="F:interleukin-1, type II, blocking receptor activity"/>
    <property type="evidence" value="ECO:0007669"/>
    <property type="project" value="InterPro"/>
</dbReference>
<dbReference type="GO" id="GO:0061809">
    <property type="term" value="F:NAD+ nucleosidase activity, cyclic ADP-ribose generating"/>
    <property type="evidence" value="ECO:0007669"/>
    <property type="project" value="UniProtKB-EC"/>
</dbReference>
<dbReference type="GO" id="GO:0007166">
    <property type="term" value="P:cell surface receptor signaling pathway"/>
    <property type="evidence" value="ECO:0000318"/>
    <property type="project" value="GO_Central"/>
</dbReference>
<dbReference type="GO" id="GO:0007417">
    <property type="term" value="P:central nervous system development"/>
    <property type="evidence" value="ECO:0000304"/>
    <property type="project" value="ProtInc"/>
</dbReference>
<dbReference type="GO" id="GO:1905606">
    <property type="term" value="P:regulation of presynapse assembly"/>
    <property type="evidence" value="ECO:0000314"/>
    <property type="project" value="SynGO"/>
</dbReference>
<dbReference type="CDD" id="cd05757">
    <property type="entry name" value="Ig2_IL1R-like"/>
    <property type="match status" value="1"/>
</dbReference>
<dbReference type="FunFam" id="2.60.40.10:FF:000188">
    <property type="entry name" value="Interleukin-1 receptor accessory protein-like 1"/>
    <property type="match status" value="1"/>
</dbReference>
<dbReference type="FunFam" id="2.60.40.10:FF:000284">
    <property type="entry name" value="interleukin-1 receptor accessory protein-like 1"/>
    <property type="match status" value="1"/>
</dbReference>
<dbReference type="FunFam" id="2.60.40.10:FF:000220">
    <property type="entry name" value="X-linked interleukin-1 receptor accessory protein-like 1"/>
    <property type="match status" value="1"/>
</dbReference>
<dbReference type="FunFam" id="3.40.50.10140:FF:000004">
    <property type="entry name" value="X-linked interleukin-1 receptor accessory protein-like 1"/>
    <property type="match status" value="1"/>
</dbReference>
<dbReference type="Gene3D" id="2.60.40.10">
    <property type="entry name" value="Immunoglobulins"/>
    <property type="match status" value="3"/>
</dbReference>
<dbReference type="Gene3D" id="3.40.50.10140">
    <property type="entry name" value="Toll/interleukin-1 receptor homology (TIR) domain"/>
    <property type="match status" value="1"/>
</dbReference>
<dbReference type="InterPro" id="IPR007110">
    <property type="entry name" value="Ig-like_dom"/>
</dbReference>
<dbReference type="InterPro" id="IPR036179">
    <property type="entry name" value="Ig-like_dom_sf"/>
</dbReference>
<dbReference type="InterPro" id="IPR013783">
    <property type="entry name" value="Ig-like_fold"/>
</dbReference>
<dbReference type="InterPro" id="IPR013098">
    <property type="entry name" value="Ig_I-set"/>
</dbReference>
<dbReference type="InterPro" id="IPR003599">
    <property type="entry name" value="Ig_sub"/>
</dbReference>
<dbReference type="InterPro" id="IPR015621">
    <property type="entry name" value="IL-1_rcpt_fam"/>
</dbReference>
<dbReference type="InterPro" id="IPR004077">
    <property type="entry name" value="IL-1_rcpt_II-typ"/>
</dbReference>
<dbReference type="InterPro" id="IPR000157">
    <property type="entry name" value="TIR_dom"/>
</dbReference>
<dbReference type="InterPro" id="IPR035897">
    <property type="entry name" value="Toll_tir_struct_dom_sf"/>
</dbReference>
<dbReference type="PANTHER" id="PTHR11890">
    <property type="entry name" value="INTERLEUKIN-1 RECEPTOR FAMILY MEMBER"/>
    <property type="match status" value="1"/>
</dbReference>
<dbReference type="PANTHER" id="PTHR11890:SF10">
    <property type="entry name" value="X-LINKED INTERLEUKIN-1 RECEPTOR ACCESSORY PROTEIN-LIKE 2"/>
    <property type="match status" value="1"/>
</dbReference>
<dbReference type="Pfam" id="PF07679">
    <property type="entry name" value="I-set"/>
    <property type="match status" value="1"/>
</dbReference>
<dbReference type="Pfam" id="PF13895">
    <property type="entry name" value="Ig_2"/>
    <property type="match status" value="1"/>
</dbReference>
<dbReference type="Pfam" id="PF01582">
    <property type="entry name" value="TIR"/>
    <property type="match status" value="1"/>
</dbReference>
<dbReference type="PRINTS" id="PR01539">
    <property type="entry name" value="INTRLEUKN1R2"/>
</dbReference>
<dbReference type="PRINTS" id="PR01537">
    <property type="entry name" value="INTRLKN1R1F"/>
</dbReference>
<dbReference type="SMART" id="SM00409">
    <property type="entry name" value="IG"/>
    <property type="match status" value="3"/>
</dbReference>
<dbReference type="SMART" id="SM00255">
    <property type="entry name" value="TIR"/>
    <property type="match status" value="1"/>
</dbReference>
<dbReference type="SUPFAM" id="SSF48726">
    <property type="entry name" value="Immunoglobulin"/>
    <property type="match status" value="3"/>
</dbReference>
<dbReference type="SUPFAM" id="SSF52200">
    <property type="entry name" value="Toll/Interleukin receptor TIR domain"/>
    <property type="match status" value="1"/>
</dbReference>
<dbReference type="PROSITE" id="PS50835">
    <property type="entry name" value="IG_LIKE"/>
    <property type="match status" value="3"/>
</dbReference>
<dbReference type="PROSITE" id="PS50104">
    <property type="entry name" value="TIR"/>
    <property type="match status" value="1"/>
</dbReference>
<keyword id="KW-0002">3D-structure</keyword>
<keyword id="KW-1015">Disulfide bond</keyword>
<keyword id="KW-0325">Glycoprotein</keyword>
<keyword id="KW-0378">Hydrolase</keyword>
<keyword id="KW-0393">Immunoglobulin domain</keyword>
<keyword id="KW-0472">Membrane</keyword>
<keyword id="KW-0520">NAD</keyword>
<keyword id="KW-1267">Proteomics identification</keyword>
<keyword id="KW-0675">Receptor</keyword>
<keyword id="KW-1185">Reference proteome</keyword>
<keyword id="KW-0677">Repeat</keyword>
<keyword id="KW-0732">Signal</keyword>
<keyword id="KW-0812">Transmembrane</keyword>
<keyword id="KW-1133">Transmembrane helix</keyword>
<gene>
    <name type="primary">IL1RAPL2</name>
    <name type="synonym">IL1R9</name>
</gene>
<evidence type="ECO:0000255" key="1"/>
<evidence type="ECO:0000255" key="2">
    <source>
        <dbReference type="PROSITE-ProRule" id="PRU00114"/>
    </source>
</evidence>
<evidence type="ECO:0000255" key="3">
    <source>
        <dbReference type="PROSITE-ProRule" id="PRU00204"/>
    </source>
</evidence>
<evidence type="ECO:0000269" key="4">
    <source>
    </source>
</evidence>
<evidence type="ECO:0000269" key="5">
    <source>
    </source>
</evidence>
<evidence type="ECO:0000269" key="6">
    <source>
    </source>
</evidence>
<evidence type="ECO:0000269" key="7">
    <source>
    </source>
</evidence>
<evidence type="ECO:0000305" key="8"/>
<evidence type="ECO:0007829" key="9">
    <source>
        <dbReference type="PDB" id="7FD3"/>
    </source>
</evidence>
<evidence type="ECO:0007829" key="10">
    <source>
        <dbReference type="PDB" id="7SZL"/>
    </source>
</evidence>
<sequence>MKPPFLLALVVCSVVSTNLKMVSKRNSVDGCIDWSVDLKTYMALAGEPVRVKCALFYSYIRTNYSTAQSTGLRLMWYKNKGDLEEPIIFSEVRMSKEEDSIWFHSAEAQDSGFYTCVLRNSTYCMKVSMSLTVAENESGLCYNSRIRYLEKSEVTKRKEISCPDMDDFKKSDQEPDVVWYKECKPKMWRSIIIQKGNALLIQEVQEEDGGNYTCELKYEGKLVRRTTELKVTALLTDKPPKPLFPMENQPSVIDVQLGKPLNIPCKAFFGFSGESGPMIYWMKGEKFIEELAGHIREGEIRLLKEHLGEKEVELALIFDSVVEADLANYTCHVENRNGRKHASVLLRKKDLIYKIELAGGLGAIFLLLVLLVVIYKCYNIELMLFYRQHFGADETNDDNKEYDAYLSYTKVDQDTLDCDNPEEEQFALEVLPDVLEKHYGYKLFIPERDLIPSGTYMEDLTRYVEQSRRLIIVLTPDYILRRGWSIFELESRLHNMLVSGEIKVILIECTELKGKVNCQEVESLKRSIKLLSLIKWKGSKSSKLNSKFWKHLVYEMPIKKKEMLPRCHVLDSAEQGLFGELQPIPSIAMTSTSATLVSSQADLPEFHPSDSMQIRHCCRGYKHEIPATTLPVPSLGNHHTYCNLPLTLLNGQLPLNNTLKDTQEFHRNSSLLPLSSKELSFTSDIW</sequence>